<dbReference type="EC" id="2.7.11.33" evidence="1"/>
<dbReference type="EC" id="2.7.4.28" evidence="1"/>
<dbReference type="EMBL" id="CP000034">
    <property type="protein sequence ID" value="ABB61908.1"/>
    <property type="molecule type" value="Genomic_DNA"/>
</dbReference>
<dbReference type="RefSeq" id="WP_000368046.1">
    <property type="nucleotide sequence ID" value="NC_007606.1"/>
</dbReference>
<dbReference type="RefSeq" id="YP_403399.1">
    <property type="nucleotide sequence ID" value="NC_007606.1"/>
</dbReference>
<dbReference type="SMR" id="Q32FJ7"/>
<dbReference type="STRING" id="300267.SDY_1797"/>
<dbReference type="EnsemblBacteria" id="ABB61908">
    <property type="protein sequence ID" value="ABB61908"/>
    <property type="gene ID" value="SDY_1797"/>
</dbReference>
<dbReference type="GeneID" id="93775866"/>
<dbReference type="KEGG" id="sdy:SDY_1797"/>
<dbReference type="PATRIC" id="fig|300267.13.peg.2169"/>
<dbReference type="HOGENOM" id="CLU_046206_1_0_6"/>
<dbReference type="Proteomes" id="UP000002716">
    <property type="component" value="Chromosome"/>
</dbReference>
<dbReference type="GO" id="GO:0043531">
    <property type="term" value="F:ADP binding"/>
    <property type="evidence" value="ECO:0007669"/>
    <property type="project" value="UniProtKB-UniRule"/>
</dbReference>
<dbReference type="GO" id="GO:0005524">
    <property type="term" value="F:ATP binding"/>
    <property type="evidence" value="ECO:0007669"/>
    <property type="project" value="InterPro"/>
</dbReference>
<dbReference type="GO" id="GO:0016776">
    <property type="term" value="F:phosphotransferase activity, phosphate group as acceptor"/>
    <property type="evidence" value="ECO:0007669"/>
    <property type="project" value="UniProtKB-UniRule"/>
</dbReference>
<dbReference type="GO" id="GO:0004674">
    <property type="term" value="F:protein serine/threonine kinase activity"/>
    <property type="evidence" value="ECO:0007669"/>
    <property type="project" value="UniProtKB-UniRule"/>
</dbReference>
<dbReference type="HAMAP" id="MF_01062">
    <property type="entry name" value="PSRP"/>
    <property type="match status" value="1"/>
</dbReference>
<dbReference type="InterPro" id="IPR005177">
    <property type="entry name" value="Kinase-pyrophosphorylase"/>
</dbReference>
<dbReference type="InterPro" id="IPR026530">
    <property type="entry name" value="PSRP"/>
</dbReference>
<dbReference type="NCBIfam" id="NF003742">
    <property type="entry name" value="PRK05339.1"/>
    <property type="match status" value="1"/>
</dbReference>
<dbReference type="PANTHER" id="PTHR31756">
    <property type="entry name" value="PYRUVATE, PHOSPHATE DIKINASE REGULATORY PROTEIN 1, CHLOROPLASTIC"/>
    <property type="match status" value="1"/>
</dbReference>
<dbReference type="PANTHER" id="PTHR31756:SF3">
    <property type="entry name" value="PYRUVATE, PHOSPHATE DIKINASE REGULATORY PROTEIN 1, CHLOROPLASTIC"/>
    <property type="match status" value="1"/>
</dbReference>
<dbReference type="Pfam" id="PF03618">
    <property type="entry name" value="Kinase-PPPase"/>
    <property type="match status" value="1"/>
</dbReference>
<name>PSRP_SHIDS</name>
<comment type="function">
    <text evidence="1">Bifunctional serine/threonine kinase and phosphorylase involved in the regulation of the phosphoenolpyruvate synthase (PEPS) by catalyzing its phosphorylation/dephosphorylation.</text>
</comment>
<comment type="catalytic activity">
    <reaction evidence="1">
        <text>[pyruvate, water dikinase] + ADP = [pyruvate, water dikinase]-phosphate + AMP + H(+)</text>
        <dbReference type="Rhea" id="RHEA:46020"/>
        <dbReference type="Rhea" id="RHEA-COMP:11425"/>
        <dbReference type="Rhea" id="RHEA-COMP:11426"/>
        <dbReference type="ChEBI" id="CHEBI:15378"/>
        <dbReference type="ChEBI" id="CHEBI:43176"/>
        <dbReference type="ChEBI" id="CHEBI:68546"/>
        <dbReference type="ChEBI" id="CHEBI:456215"/>
        <dbReference type="ChEBI" id="CHEBI:456216"/>
        <dbReference type="EC" id="2.7.11.33"/>
    </reaction>
</comment>
<comment type="catalytic activity">
    <reaction evidence="1">
        <text>[pyruvate, water dikinase]-phosphate + phosphate + H(+) = [pyruvate, water dikinase] + diphosphate</text>
        <dbReference type="Rhea" id="RHEA:48580"/>
        <dbReference type="Rhea" id="RHEA-COMP:11425"/>
        <dbReference type="Rhea" id="RHEA-COMP:11426"/>
        <dbReference type="ChEBI" id="CHEBI:15378"/>
        <dbReference type="ChEBI" id="CHEBI:33019"/>
        <dbReference type="ChEBI" id="CHEBI:43176"/>
        <dbReference type="ChEBI" id="CHEBI:43474"/>
        <dbReference type="ChEBI" id="CHEBI:68546"/>
        <dbReference type="EC" id="2.7.4.28"/>
    </reaction>
</comment>
<comment type="similarity">
    <text evidence="1">Belongs to the pyruvate, phosphate/water dikinase regulatory protein family. PSRP subfamily.</text>
</comment>
<evidence type="ECO:0000255" key="1">
    <source>
        <dbReference type="HAMAP-Rule" id="MF_01062"/>
    </source>
</evidence>
<sequence length="277" mass="31211">MDNAVDRHVFYISDGTAITAEVLGHAVMSQFPVTISSITLPFVENESRARAVKDQIDAIYHQTGVRPLVFYSIVLPEIRAIILQSEGFCQDIVQALVAPLQQEMKLDPTPIAHRTHGLNPNNLNKYDARIAAIDYTLAHDDGISLRNLDQAQVILLGVSRCGKTPTSLYLAMQFGIRAANYPFIADDMDNLVLPASLKPLQHKLFGLTIDPERLAAIREERRENSRYASLRQCRMEVAEVEALYRKNQIPWINSTNYSVEEIATKILDIMGLSRRMY</sequence>
<protein>
    <recommendedName>
        <fullName evidence="1">Phosphoenolpyruvate synthase regulatory protein</fullName>
        <shortName evidence="1">PEP synthase regulatory protein</shortName>
        <shortName evidence="1">PSRP</shortName>
        <ecNumber evidence="1">2.7.11.33</ecNumber>
        <ecNumber evidence="1">2.7.4.28</ecNumber>
    </recommendedName>
    <alternativeName>
        <fullName evidence="1">Pyruvate, water dikinase regulatory protein</fullName>
    </alternativeName>
</protein>
<organism>
    <name type="scientific">Shigella dysenteriae serotype 1 (strain Sd197)</name>
    <dbReference type="NCBI Taxonomy" id="300267"/>
    <lineage>
        <taxon>Bacteria</taxon>
        <taxon>Pseudomonadati</taxon>
        <taxon>Pseudomonadota</taxon>
        <taxon>Gammaproteobacteria</taxon>
        <taxon>Enterobacterales</taxon>
        <taxon>Enterobacteriaceae</taxon>
        <taxon>Shigella</taxon>
    </lineage>
</organism>
<gene>
    <name evidence="1" type="primary">ppsR</name>
    <name type="ordered locus">SDY_1797</name>
</gene>
<accession>Q32FJ7</accession>
<reference key="1">
    <citation type="journal article" date="2005" name="Nucleic Acids Res.">
        <title>Genome dynamics and diversity of Shigella species, the etiologic agents of bacillary dysentery.</title>
        <authorList>
            <person name="Yang F."/>
            <person name="Yang J."/>
            <person name="Zhang X."/>
            <person name="Chen L."/>
            <person name="Jiang Y."/>
            <person name="Yan Y."/>
            <person name="Tang X."/>
            <person name="Wang J."/>
            <person name="Xiong Z."/>
            <person name="Dong J."/>
            <person name="Xue Y."/>
            <person name="Zhu Y."/>
            <person name="Xu X."/>
            <person name="Sun L."/>
            <person name="Chen S."/>
            <person name="Nie H."/>
            <person name="Peng J."/>
            <person name="Xu J."/>
            <person name="Wang Y."/>
            <person name="Yuan Z."/>
            <person name="Wen Y."/>
            <person name="Yao Z."/>
            <person name="Shen Y."/>
            <person name="Qiang B."/>
            <person name="Hou Y."/>
            <person name="Yu J."/>
            <person name="Jin Q."/>
        </authorList>
    </citation>
    <scope>NUCLEOTIDE SEQUENCE [LARGE SCALE GENOMIC DNA]</scope>
    <source>
        <strain>Sd197</strain>
    </source>
</reference>
<keyword id="KW-0418">Kinase</keyword>
<keyword id="KW-0547">Nucleotide-binding</keyword>
<keyword id="KW-1185">Reference proteome</keyword>
<keyword id="KW-0723">Serine/threonine-protein kinase</keyword>
<keyword id="KW-0808">Transferase</keyword>
<proteinExistence type="inferred from homology"/>
<feature type="chain" id="PRO_0000196711" description="Phosphoenolpyruvate synthase regulatory protein">
    <location>
        <begin position="1"/>
        <end position="277"/>
    </location>
</feature>
<feature type="binding site" evidence="1">
    <location>
        <begin position="157"/>
        <end position="164"/>
    </location>
    <ligand>
        <name>ADP</name>
        <dbReference type="ChEBI" id="CHEBI:456216"/>
    </ligand>
</feature>